<proteinExistence type="inferred from homology"/>
<comment type="catalytic activity">
    <reaction evidence="1">
        <text>(S)-4-amino-5-oxopentanoate = 5-aminolevulinate</text>
        <dbReference type="Rhea" id="RHEA:14265"/>
        <dbReference type="ChEBI" id="CHEBI:57501"/>
        <dbReference type="ChEBI" id="CHEBI:356416"/>
        <dbReference type="EC" id="5.4.3.8"/>
    </reaction>
</comment>
<comment type="cofactor">
    <cofactor evidence="1">
        <name>pyridoxal 5'-phosphate</name>
        <dbReference type="ChEBI" id="CHEBI:597326"/>
    </cofactor>
</comment>
<comment type="pathway">
    <text evidence="1">Porphyrin-containing compound metabolism; protoporphyrin-IX biosynthesis; 5-aminolevulinate from L-glutamyl-tRNA(Glu): step 2/2.</text>
</comment>
<comment type="subunit">
    <text evidence="1">Homodimer.</text>
</comment>
<comment type="subcellular location">
    <subcellularLocation>
        <location evidence="1">Cytoplasm</location>
    </subcellularLocation>
</comment>
<comment type="similarity">
    <text evidence="1">Belongs to the class-III pyridoxal-phosphate-dependent aminotransferase family. HemL subfamily.</text>
</comment>
<name>GSA_WOLSU</name>
<gene>
    <name evidence="1" type="primary">hemL</name>
    <name type="ordered locus">WS1886</name>
</gene>
<organism>
    <name type="scientific">Wolinella succinogenes (strain ATCC 29543 / DSM 1740 / CCUG 13145 / JCM 31913 / LMG 7466 / NCTC 11488 / FDC 602W)</name>
    <name type="common">Vibrio succinogenes</name>
    <dbReference type="NCBI Taxonomy" id="273121"/>
    <lineage>
        <taxon>Bacteria</taxon>
        <taxon>Pseudomonadati</taxon>
        <taxon>Campylobacterota</taxon>
        <taxon>Epsilonproteobacteria</taxon>
        <taxon>Campylobacterales</taxon>
        <taxon>Helicobacteraceae</taxon>
        <taxon>Wolinella</taxon>
    </lineage>
</organism>
<dbReference type="EC" id="5.4.3.8" evidence="1"/>
<dbReference type="EMBL" id="BX571662">
    <property type="protein sequence ID" value="CAE10896.1"/>
    <property type="molecule type" value="Genomic_DNA"/>
</dbReference>
<dbReference type="RefSeq" id="WP_011139679.1">
    <property type="nucleotide sequence ID" value="NC_005090.1"/>
</dbReference>
<dbReference type="SMR" id="Q7M847"/>
<dbReference type="STRING" id="273121.WS1886"/>
<dbReference type="KEGG" id="wsu:WS1886"/>
<dbReference type="eggNOG" id="COG0001">
    <property type="taxonomic scope" value="Bacteria"/>
</dbReference>
<dbReference type="HOGENOM" id="CLU_016922_1_5_7"/>
<dbReference type="UniPathway" id="UPA00251">
    <property type="reaction ID" value="UER00317"/>
</dbReference>
<dbReference type="Proteomes" id="UP000000422">
    <property type="component" value="Chromosome"/>
</dbReference>
<dbReference type="GO" id="GO:0005737">
    <property type="term" value="C:cytoplasm"/>
    <property type="evidence" value="ECO:0007669"/>
    <property type="project" value="UniProtKB-SubCell"/>
</dbReference>
<dbReference type="GO" id="GO:0042286">
    <property type="term" value="F:glutamate-1-semialdehyde 2,1-aminomutase activity"/>
    <property type="evidence" value="ECO:0007669"/>
    <property type="project" value="UniProtKB-UniRule"/>
</dbReference>
<dbReference type="GO" id="GO:0030170">
    <property type="term" value="F:pyridoxal phosphate binding"/>
    <property type="evidence" value="ECO:0007669"/>
    <property type="project" value="InterPro"/>
</dbReference>
<dbReference type="GO" id="GO:0008483">
    <property type="term" value="F:transaminase activity"/>
    <property type="evidence" value="ECO:0007669"/>
    <property type="project" value="InterPro"/>
</dbReference>
<dbReference type="GO" id="GO:0006782">
    <property type="term" value="P:protoporphyrinogen IX biosynthetic process"/>
    <property type="evidence" value="ECO:0007669"/>
    <property type="project" value="UniProtKB-UniRule"/>
</dbReference>
<dbReference type="CDD" id="cd00610">
    <property type="entry name" value="OAT_like"/>
    <property type="match status" value="1"/>
</dbReference>
<dbReference type="FunFam" id="3.40.640.10:FF:000021">
    <property type="entry name" value="Glutamate-1-semialdehyde 2,1-aminomutase"/>
    <property type="match status" value="1"/>
</dbReference>
<dbReference type="Gene3D" id="3.90.1150.10">
    <property type="entry name" value="Aspartate Aminotransferase, domain 1"/>
    <property type="match status" value="1"/>
</dbReference>
<dbReference type="Gene3D" id="3.40.640.10">
    <property type="entry name" value="Type I PLP-dependent aspartate aminotransferase-like (Major domain)"/>
    <property type="match status" value="1"/>
</dbReference>
<dbReference type="HAMAP" id="MF_00375">
    <property type="entry name" value="HemL_aminotrans_3"/>
    <property type="match status" value="1"/>
</dbReference>
<dbReference type="InterPro" id="IPR004639">
    <property type="entry name" value="4pyrrol_synth_GluAld_NH2Trfase"/>
</dbReference>
<dbReference type="InterPro" id="IPR005814">
    <property type="entry name" value="Aminotrans_3"/>
</dbReference>
<dbReference type="InterPro" id="IPR049704">
    <property type="entry name" value="Aminotrans_3_PPA_site"/>
</dbReference>
<dbReference type="InterPro" id="IPR015424">
    <property type="entry name" value="PyrdxlP-dep_Trfase"/>
</dbReference>
<dbReference type="InterPro" id="IPR015421">
    <property type="entry name" value="PyrdxlP-dep_Trfase_major"/>
</dbReference>
<dbReference type="InterPro" id="IPR015422">
    <property type="entry name" value="PyrdxlP-dep_Trfase_small"/>
</dbReference>
<dbReference type="NCBIfam" id="TIGR00713">
    <property type="entry name" value="hemL"/>
    <property type="match status" value="1"/>
</dbReference>
<dbReference type="NCBIfam" id="NF000818">
    <property type="entry name" value="PRK00062.1"/>
    <property type="match status" value="1"/>
</dbReference>
<dbReference type="PANTHER" id="PTHR43713">
    <property type="entry name" value="GLUTAMATE-1-SEMIALDEHYDE 2,1-AMINOMUTASE"/>
    <property type="match status" value="1"/>
</dbReference>
<dbReference type="PANTHER" id="PTHR43713:SF3">
    <property type="entry name" value="GLUTAMATE-1-SEMIALDEHYDE 2,1-AMINOMUTASE 1, CHLOROPLASTIC-RELATED"/>
    <property type="match status" value="1"/>
</dbReference>
<dbReference type="Pfam" id="PF00202">
    <property type="entry name" value="Aminotran_3"/>
    <property type="match status" value="1"/>
</dbReference>
<dbReference type="SUPFAM" id="SSF53383">
    <property type="entry name" value="PLP-dependent transferases"/>
    <property type="match status" value="1"/>
</dbReference>
<dbReference type="PROSITE" id="PS00600">
    <property type="entry name" value="AA_TRANSFER_CLASS_3"/>
    <property type="match status" value="1"/>
</dbReference>
<protein>
    <recommendedName>
        <fullName evidence="1">Glutamate-1-semialdehyde 2,1-aminomutase</fullName>
        <shortName evidence="1">GSA</shortName>
        <ecNumber evidence="1">5.4.3.8</ecNumber>
    </recommendedName>
    <alternativeName>
        <fullName evidence="1">Glutamate-1-semialdehyde aminotransferase</fullName>
        <shortName evidence="1">GSA-AT</shortName>
    </alternativeName>
</protein>
<sequence length="431" mass="46249">MERINSINDFNEAKQVIPGGVNSPVRAFRAVGGTPPFIKEAKGSYLVDEDGNRYIDFVQSWGPLLFGHADLDIQKAVEEAIKRGLSFGAPTTSETLLAKEIIALYEGIEKIRFTSSGTEATMSAIRLARGYTGRDDIIKFEGCYHGHSDALLVQAGSGLATFGNPSSPGVPQSFTKHTLLARYNDLESVRECFKKSSGVACVILEPIAGNMGLVPATQEFIQGLRKLCDEQGSVLIFDEVMSGFRASFGGAQALYGVIPDMATFGKVIGGGMPVGAFGGRSDIMACLSPEGAVYQAGTLSGNPVAMAAGIASIRKIKQGGEALFSRLESLALRLMEGFKKCAQKHQIPLQTTVRGSMFGFFFNHAPVSNFEEALQSDTALFAKFHQAMLERGVYLACSQFETGFICASMDESLVDEVIAKIDEALEEIGRG</sequence>
<reference key="1">
    <citation type="journal article" date="2003" name="Proc. Natl. Acad. Sci. U.S.A.">
        <title>Complete genome sequence and analysis of Wolinella succinogenes.</title>
        <authorList>
            <person name="Baar C."/>
            <person name="Eppinger M."/>
            <person name="Raddatz G."/>
            <person name="Simon J."/>
            <person name="Lanz C."/>
            <person name="Klimmek O."/>
            <person name="Nandakumar R."/>
            <person name="Gross R."/>
            <person name="Rosinus A."/>
            <person name="Keller H."/>
            <person name="Jagtap P."/>
            <person name="Linke B."/>
            <person name="Meyer F."/>
            <person name="Lederer H."/>
            <person name="Schuster S.C."/>
        </authorList>
    </citation>
    <scope>NUCLEOTIDE SEQUENCE [LARGE SCALE GENOMIC DNA]</scope>
    <source>
        <strain>ATCC 29543 / DSM 1740 / CCUG 13145 / JCM 31913 / LMG 7466 / NCTC 11488 / FDC 602W</strain>
    </source>
</reference>
<evidence type="ECO:0000255" key="1">
    <source>
        <dbReference type="HAMAP-Rule" id="MF_00375"/>
    </source>
</evidence>
<accession>Q7M847</accession>
<keyword id="KW-0963">Cytoplasm</keyword>
<keyword id="KW-0413">Isomerase</keyword>
<keyword id="KW-0627">Porphyrin biosynthesis</keyword>
<keyword id="KW-0663">Pyridoxal phosphate</keyword>
<keyword id="KW-1185">Reference proteome</keyword>
<feature type="chain" id="PRO_0000120468" description="Glutamate-1-semialdehyde 2,1-aminomutase">
    <location>
        <begin position="1"/>
        <end position="431"/>
    </location>
</feature>
<feature type="modified residue" description="N6-(pyridoxal phosphate)lysine" evidence="1">
    <location>
        <position position="266"/>
    </location>
</feature>